<organism>
    <name type="scientific">Nitrosopumilus maritimus (strain SCM1)</name>
    <dbReference type="NCBI Taxonomy" id="436308"/>
    <lineage>
        <taxon>Archaea</taxon>
        <taxon>Nitrososphaerota</taxon>
        <taxon>Nitrososphaeria</taxon>
        <taxon>Nitrosopumilales</taxon>
        <taxon>Nitrosopumilaceae</taxon>
        <taxon>Nitrosopumilus</taxon>
    </lineage>
</organism>
<proteinExistence type="inferred from homology"/>
<sequence>MGRMHTHRHGKSHSIRPATLRAPSWITQSPAEIEELVIKYSKDGLTPSQIGIKLRDQHSIPLIKPITKKTIGEILEENDLKAEMPEDLENIVKKAVGLQRHLKENKGDRRNVRSLELIEAKVHRLSVYYKKIGRIPATWKYKSVVAQLE</sequence>
<protein>
    <recommendedName>
        <fullName evidence="1">Small ribosomal subunit protein uS15</fullName>
    </recommendedName>
    <alternativeName>
        <fullName evidence="3">30S ribosomal protein S15</fullName>
    </alternativeName>
</protein>
<keyword id="KW-1185">Reference proteome</keyword>
<keyword id="KW-0687">Ribonucleoprotein</keyword>
<keyword id="KW-0689">Ribosomal protein</keyword>
<comment type="subunit">
    <text evidence="1">Part of the 30S ribosomal subunit.</text>
</comment>
<comment type="similarity">
    <text evidence="1">Belongs to the universal ribosomal protein uS15 family.</text>
</comment>
<feature type="chain" id="PRO_0000354229" description="Small ribosomal subunit protein uS15">
    <location>
        <begin position="1"/>
        <end position="149"/>
    </location>
</feature>
<feature type="region of interest" description="Disordered" evidence="2">
    <location>
        <begin position="1"/>
        <end position="20"/>
    </location>
</feature>
<feature type="compositionally biased region" description="Basic residues" evidence="2">
    <location>
        <begin position="1"/>
        <end position="14"/>
    </location>
</feature>
<dbReference type="EMBL" id="CP000866">
    <property type="protein sequence ID" value="ABX13404.1"/>
    <property type="molecule type" value="Genomic_DNA"/>
</dbReference>
<dbReference type="RefSeq" id="WP_012215891.1">
    <property type="nucleotide sequence ID" value="NC_010085.1"/>
</dbReference>
<dbReference type="SMR" id="A9A4V0"/>
<dbReference type="FunCoup" id="A9A4V0">
    <property type="interactions" value="178"/>
</dbReference>
<dbReference type="STRING" id="436308.Nmar_1508"/>
<dbReference type="EnsemblBacteria" id="ABX13404">
    <property type="protein sequence ID" value="ABX13404"/>
    <property type="gene ID" value="Nmar_1508"/>
</dbReference>
<dbReference type="GeneID" id="5774051"/>
<dbReference type="KEGG" id="nmr:Nmar_1508"/>
<dbReference type="eggNOG" id="arCOG04185">
    <property type="taxonomic scope" value="Archaea"/>
</dbReference>
<dbReference type="HOGENOM" id="CLU_090139_2_0_2"/>
<dbReference type="InParanoid" id="A9A4V0"/>
<dbReference type="OrthoDB" id="6533at2157"/>
<dbReference type="PhylomeDB" id="A9A4V0"/>
<dbReference type="Proteomes" id="UP000000792">
    <property type="component" value="Chromosome"/>
</dbReference>
<dbReference type="GO" id="GO:0022627">
    <property type="term" value="C:cytosolic small ribosomal subunit"/>
    <property type="evidence" value="ECO:0000318"/>
    <property type="project" value="GO_Central"/>
</dbReference>
<dbReference type="GO" id="GO:0070181">
    <property type="term" value="F:small ribosomal subunit rRNA binding"/>
    <property type="evidence" value="ECO:0000318"/>
    <property type="project" value="GO_Central"/>
</dbReference>
<dbReference type="GO" id="GO:0003735">
    <property type="term" value="F:structural constituent of ribosome"/>
    <property type="evidence" value="ECO:0000318"/>
    <property type="project" value="GO_Central"/>
</dbReference>
<dbReference type="GO" id="GO:0006412">
    <property type="term" value="P:translation"/>
    <property type="evidence" value="ECO:0007669"/>
    <property type="project" value="UniProtKB-UniRule"/>
</dbReference>
<dbReference type="CDD" id="cd00353">
    <property type="entry name" value="Ribosomal_S15p_S13e"/>
    <property type="match status" value="1"/>
</dbReference>
<dbReference type="FunFam" id="1.10.287.10:FF:000003">
    <property type="entry name" value="40S ribosomal protein S13"/>
    <property type="match status" value="1"/>
</dbReference>
<dbReference type="Gene3D" id="4.10.860.130">
    <property type="match status" value="1"/>
</dbReference>
<dbReference type="Gene3D" id="1.10.287.10">
    <property type="entry name" value="S15/NS1, RNA-binding"/>
    <property type="match status" value="1"/>
</dbReference>
<dbReference type="HAMAP" id="MF_01343_A">
    <property type="entry name" value="Ribosomal_uS15_A"/>
    <property type="match status" value="1"/>
</dbReference>
<dbReference type="InterPro" id="IPR000589">
    <property type="entry name" value="Ribosomal_uS15"/>
</dbReference>
<dbReference type="InterPro" id="IPR023029">
    <property type="entry name" value="Ribosomal_uS15_arc_euk"/>
</dbReference>
<dbReference type="InterPro" id="IPR012606">
    <property type="entry name" value="Ribosomal_uS15_N"/>
</dbReference>
<dbReference type="InterPro" id="IPR009068">
    <property type="entry name" value="uS15_NS1_RNA-bd_sf"/>
</dbReference>
<dbReference type="NCBIfam" id="NF006331">
    <property type="entry name" value="PRK08561.1"/>
    <property type="match status" value="1"/>
</dbReference>
<dbReference type="PANTHER" id="PTHR11885">
    <property type="entry name" value="RIBOSOMAL PROTEIN S15P/S13E"/>
    <property type="match status" value="1"/>
</dbReference>
<dbReference type="PANTHER" id="PTHR11885:SF6">
    <property type="entry name" value="SMALL RIBOSOMAL SUBUNIT PROTEIN US15"/>
    <property type="match status" value="1"/>
</dbReference>
<dbReference type="Pfam" id="PF08069">
    <property type="entry name" value="Ribosomal_S13_N"/>
    <property type="match status" value="1"/>
</dbReference>
<dbReference type="Pfam" id="PF00312">
    <property type="entry name" value="Ribosomal_S15"/>
    <property type="match status" value="1"/>
</dbReference>
<dbReference type="SMART" id="SM01386">
    <property type="entry name" value="Ribosomal_S13_N"/>
    <property type="match status" value="1"/>
</dbReference>
<dbReference type="SMART" id="SM01387">
    <property type="entry name" value="Ribosomal_S15"/>
    <property type="match status" value="1"/>
</dbReference>
<dbReference type="SUPFAM" id="SSF47060">
    <property type="entry name" value="S15/NS1 RNA-binding domain"/>
    <property type="match status" value="1"/>
</dbReference>
<dbReference type="PROSITE" id="PS00362">
    <property type="entry name" value="RIBOSOMAL_S15"/>
    <property type="match status" value="1"/>
</dbReference>
<name>RS15_NITMS</name>
<reference key="1">
    <citation type="journal article" date="2010" name="Proc. Natl. Acad. Sci. U.S.A.">
        <title>Nitrosopumilus maritimus genome reveals unique mechanisms for nitrification and autotrophy in globally distributed marine crenarchaea.</title>
        <authorList>
            <person name="Walker C.B."/>
            <person name="de la Torre J.R."/>
            <person name="Klotz M.G."/>
            <person name="Urakawa H."/>
            <person name="Pinel N."/>
            <person name="Arp D.J."/>
            <person name="Brochier-Armanet C."/>
            <person name="Chain P.S."/>
            <person name="Chan P.P."/>
            <person name="Gollabgir A."/>
            <person name="Hemp J."/>
            <person name="Hugler M."/>
            <person name="Karr E.A."/>
            <person name="Konneke M."/>
            <person name="Shin M."/>
            <person name="Lawton T.J."/>
            <person name="Lowe T."/>
            <person name="Martens-Habbena W."/>
            <person name="Sayavedra-Soto L.A."/>
            <person name="Lang D."/>
            <person name="Sievert S.M."/>
            <person name="Rosenzweig A.C."/>
            <person name="Manning G."/>
            <person name="Stahl D.A."/>
        </authorList>
    </citation>
    <scope>NUCLEOTIDE SEQUENCE [LARGE SCALE GENOMIC DNA]</scope>
    <source>
        <strain>SCM1</strain>
    </source>
</reference>
<gene>
    <name evidence="1" type="primary">rps15</name>
    <name type="ordered locus">Nmar_1508</name>
</gene>
<accession>A9A4V0</accession>
<evidence type="ECO:0000255" key="1">
    <source>
        <dbReference type="HAMAP-Rule" id="MF_01343"/>
    </source>
</evidence>
<evidence type="ECO:0000256" key="2">
    <source>
        <dbReference type="SAM" id="MobiDB-lite"/>
    </source>
</evidence>
<evidence type="ECO:0000305" key="3"/>